<proteinExistence type="inferred from homology"/>
<gene>
    <name type="primary">clpB2</name>
    <name type="ordered locus">CT2281</name>
</gene>
<protein>
    <recommendedName>
        <fullName>Probable chaperone protein ClpB 2</fullName>
    </recommendedName>
</protein>
<reference key="1">
    <citation type="journal article" date="2002" name="Proc. Natl. Acad. Sci. U.S.A.">
        <title>The complete genome sequence of Chlorobium tepidum TLS, a photosynthetic, anaerobic, green-sulfur bacterium.</title>
        <authorList>
            <person name="Eisen J.A."/>
            <person name="Nelson K.E."/>
            <person name="Paulsen I.T."/>
            <person name="Heidelberg J.F."/>
            <person name="Wu M."/>
            <person name="Dodson R.J."/>
            <person name="DeBoy R.T."/>
            <person name="Gwinn M.L."/>
            <person name="Nelson W.C."/>
            <person name="Haft D.H."/>
            <person name="Hickey E.K."/>
            <person name="Peterson J.D."/>
            <person name="Durkin A.S."/>
            <person name="Kolonay J.F."/>
            <person name="Yang F."/>
            <person name="Holt I.E."/>
            <person name="Umayam L.A."/>
            <person name="Mason T.M."/>
            <person name="Brenner M."/>
            <person name="Shea T.P."/>
            <person name="Parksey D.S."/>
            <person name="Nierman W.C."/>
            <person name="Feldblyum T.V."/>
            <person name="Hansen C.L."/>
            <person name="Craven M.B."/>
            <person name="Radune D."/>
            <person name="Vamathevan J.J."/>
            <person name="Khouri H.M."/>
            <person name="White O."/>
            <person name="Gruber T.M."/>
            <person name="Ketchum K.A."/>
            <person name="Venter J.C."/>
            <person name="Tettelin H."/>
            <person name="Bryant D.A."/>
            <person name="Fraser C.M."/>
        </authorList>
    </citation>
    <scope>NUCLEOTIDE SEQUENCE [LARGE SCALE GENOMIC DNA]</scope>
    <source>
        <strain>ATCC 49652 / DSM 12025 / NBRC 103806 / TLS</strain>
    </source>
</reference>
<name>CLPB2_CHLTE</name>
<accession>Q8KA87</accession>
<feature type="chain" id="PRO_0000191108" description="Probable chaperone protein ClpB 2">
    <location>
        <begin position="1"/>
        <end position="442"/>
    </location>
</feature>
<feature type="domain" description="Clp R" evidence="3">
    <location>
        <begin position="5"/>
        <end position="149"/>
    </location>
</feature>
<feature type="region of interest" description="Repeat 1" evidence="3">
    <location>
        <begin position="8"/>
        <end position="73"/>
    </location>
</feature>
<feature type="region of interest" description="Repeat 2" evidence="3">
    <location>
        <begin position="86"/>
        <end position="149"/>
    </location>
</feature>
<feature type="region of interest" description="NBD1" evidence="1">
    <location>
        <begin position="162"/>
        <end position="343"/>
    </location>
</feature>
<feature type="region of interest" description="Linker" evidence="1">
    <location>
        <begin position="344"/>
        <end position="442"/>
    </location>
</feature>
<feature type="coiled-coil region" evidence="1">
    <location>
        <begin position="394"/>
        <end position="442"/>
    </location>
</feature>
<feature type="binding site" evidence="2">
    <location>
        <begin position="209"/>
        <end position="216"/>
    </location>
    <ligand>
        <name>ATP</name>
        <dbReference type="ChEBI" id="CHEBI:30616"/>
    </ligand>
</feature>
<keyword id="KW-0067">ATP-binding</keyword>
<keyword id="KW-0143">Chaperone</keyword>
<keyword id="KW-0175">Coiled coil</keyword>
<keyword id="KW-0963">Cytoplasm</keyword>
<keyword id="KW-0547">Nucleotide-binding</keyword>
<keyword id="KW-1185">Reference proteome</keyword>
<keyword id="KW-0677">Repeat</keyword>
<keyword id="KW-0346">Stress response</keyword>
<organism>
    <name type="scientific">Chlorobaculum tepidum (strain ATCC 49652 / DSM 12025 / NBRC 103806 / TLS)</name>
    <name type="common">Chlorobium tepidum</name>
    <dbReference type="NCBI Taxonomy" id="194439"/>
    <lineage>
        <taxon>Bacteria</taxon>
        <taxon>Pseudomonadati</taxon>
        <taxon>Chlorobiota</taxon>
        <taxon>Chlorobiia</taxon>
        <taxon>Chlorobiales</taxon>
        <taxon>Chlorobiaceae</taxon>
        <taxon>Chlorobaculum</taxon>
    </lineage>
</organism>
<evidence type="ECO:0000250" key="1"/>
<evidence type="ECO:0000255" key="2"/>
<evidence type="ECO:0000255" key="3">
    <source>
        <dbReference type="PROSITE-ProRule" id="PRU01251"/>
    </source>
</evidence>
<evidence type="ECO:0000305" key="4"/>
<comment type="function">
    <text evidence="1">Part of a stress-induced multi-chaperone system, it is involved in the recovery of the cell from heat-induced damage, in cooperation with DnaK, DnaJ and GrpE. Acts before DnaK, in the processing of protein aggregates. Protein binding stimulates the ATPase activity; ATP hydrolysis unfolds the denatured protein aggregates, which probably helps expose new hydrophobic binding sites on the surface of ClpB-bound aggregates, contributing to the solubilization and refolding of denatured protein aggregates by DnaK (By similarity).</text>
</comment>
<comment type="subunit">
    <text evidence="1">Homohexamer. The oligomerization is ATP-dependent (By similarity).</text>
</comment>
<comment type="subcellular location">
    <subcellularLocation>
        <location evidence="4">Cytoplasm</location>
    </subcellularLocation>
</comment>
<comment type="domain">
    <text evidence="1">The Clp repeat (R) domain probably functions as a substrate-discriminating domain, recruiting aggregated proteins to the ClpB hexamer and/or stabilizing bound proteins. The NBD2 domain is responsible for oligomerization, whereas the NBD1 domain stabilizes the hexamer probably in an ATP-dependent manner. The movement of the coiled-coil domain is essential for ClpB ability to rescue proteins from an aggregated state, probably by pulling apart large aggregated proteins, which are bound between the coiled-coils motifs of adjacent ClpB subunits in the functional hexamer (By similarity).</text>
</comment>
<comment type="similarity">
    <text evidence="4">Belongs to the ClpA/ClpB family.</text>
</comment>
<comment type="caution">
    <text evidence="4">This protein is much smaller than the orthologs present in other bacteria; the NBD2 and C-terminal domains are missing. However, there is a paralog in the genome (clpB1) that encodes a protein which contains only the NBD2 and C-terminal domains.</text>
</comment>
<sequence>MHFDPNKFTVKAQEALQAASMLASSKQNQQIEPEHLLSVMLGDHDNIACQIARKLETPVDTLLSVVDREIDRIPKVTGASATGQYISSDLGKVFDTALKEAEQLKDEYISSEHLFIAMSEAGVKVSKLLKDAGIDRNAILKVLTSFRGSQRVTSQNAEESYQSLKKYSRNLNDLVIKGKLDPVIGRDDEIRRVLQILSRRTKNNPVLIGEPGVGKTAIVEGIAQRIVGGDVPENLKSKQIAALDIAALVAGTKFRGEFEERLKALVKEVQASDGEVILFIDELHLLVGAGSAEGSMDAANILKPALARGELRCIGATTLDEYRKHIEKDAALERRFQTVIVDQPSVEDTVSILRGLKEKYEIHHGVRIKDAALVAAAELSNRYIADRFLPDKAIDLIDEACSRLRLEIDSEPEELDRINRELRRLEIEREALKRELEATGSV</sequence>
<dbReference type="EMBL" id="AE006470">
    <property type="protein sequence ID" value="AAM73494.1"/>
    <property type="molecule type" value="Genomic_DNA"/>
</dbReference>
<dbReference type="RefSeq" id="NP_663152.1">
    <property type="nucleotide sequence ID" value="NC_002932.3"/>
</dbReference>
<dbReference type="RefSeq" id="WP_010933929.1">
    <property type="nucleotide sequence ID" value="NC_002932.3"/>
</dbReference>
<dbReference type="SMR" id="Q8KA87"/>
<dbReference type="STRING" id="194439.CT2281"/>
<dbReference type="EnsemblBacteria" id="AAM73494">
    <property type="protein sequence ID" value="AAM73494"/>
    <property type="gene ID" value="CT2281"/>
</dbReference>
<dbReference type="KEGG" id="cte:CT2281"/>
<dbReference type="PATRIC" id="fig|194439.7.peg.2075"/>
<dbReference type="eggNOG" id="COG0542">
    <property type="taxonomic scope" value="Bacteria"/>
</dbReference>
<dbReference type="HOGENOM" id="CLU_005070_0_0_10"/>
<dbReference type="OrthoDB" id="9803641at2"/>
<dbReference type="Proteomes" id="UP000001007">
    <property type="component" value="Chromosome"/>
</dbReference>
<dbReference type="GO" id="GO:0005737">
    <property type="term" value="C:cytoplasm"/>
    <property type="evidence" value="ECO:0007669"/>
    <property type="project" value="UniProtKB-SubCell"/>
</dbReference>
<dbReference type="GO" id="GO:0005524">
    <property type="term" value="F:ATP binding"/>
    <property type="evidence" value="ECO:0007669"/>
    <property type="project" value="UniProtKB-KW"/>
</dbReference>
<dbReference type="GO" id="GO:0016887">
    <property type="term" value="F:ATP hydrolysis activity"/>
    <property type="evidence" value="ECO:0007669"/>
    <property type="project" value="InterPro"/>
</dbReference>
<dbReference type="GO" id="GO:0034605">
    <property type="term" value="P:cellular response to heat"/>
    <property type="evidence" value="ECO:0007669"/>
    <property type="project" value="TreeGrafter"/>
</dbReference>
<dbReference type="CDD" id="cd00009">
    <property type="entry name" value="AAA"/>
    <property type="match status" value="1"/>
</dbReference>
<dbReference type="FunFam" id="3.40.50.300:FF:000120">
    <property type="entry name" value="ATP-dependent chaperone ClpB"/>
    <property type="match status" value="1"/>
</dbReference>
<dbReference type="FunFam" id="3.40.50.300:FF:000010">
    <property type="entry name" value="Chaperone clpB 1, putative"/>
    <property type="match status" value="1"/>
</dbReference>
<dbReference type="Gene3D" id="1.10.1780.10">
    <property type="entry name" value="Clp, N-terminal domain"/>
    <property type="match status" value="1"/>
</dbReference>
<dbReference type="Gene3D" id="3.40.50.300">
    <property type="entry name" value="P-loop containing nucleotide triphosphate hydrolases"/>
    <property type="match status" value="2"/>
</dbReference>
<dbReference type="InterPro" id="IPR003593">
    <property type="entry name" value="AAA+_ATPase"/>
</dbReference>
<dbReference type="InterPro" id="IPR003959">
    <property type="entry name" value="ATPase_AAA_core"/>
</dbReference>
<dbReference type="InterPro" id="IPR036628">
    <property type="entry name" value="Clp_N_dom_sf"/>
</dbReference>
<dbReference type="InterPro" id="IPR004176">
    <property type="entry name" value="Clp_R_dom"/>
</dbReference>
<dbReference type="InterPro" id="IPR018368">
    <property type="entry name" value="ClpA/B_CS1"/>
</dbReference>
<dbReference type="InterPro" id="IPR041546">
    <property type="entry name" value="ClpA/ClpB_AAA_lid"/>
</dbReference>
<dbReference type="InterPro" id="IPR050130">
    <property type="entry name" value="ClpA_ClpB"/>
</dbReference>
<dbReference type="InterPro" id="IPR027417">
    <property type="entry name" value="P-loop_NTPase"/>
</dbReference>
<dbReference type="PANTHER" id="PTHR11638">
    <property type="entry name" value="ATP-DEPENDENT CLP PROTEASE"/>
    <property type="match status" value="1"/>
</dbReference>
<dbReference type="PANTHER" id="PTHR11638:SF18">
    <property type="entry name" value="HEAT SHOCK PROTEIN 104"/>
    <property type="match status" value="1"/>
</dbReference>
<dbReference type="Pfam" id="PF00004">
    <property type="entry name" value="AAA"/>
    <property type="match status" value="1"/>
</dbReference>
<dbReference type="Pfam" id="PF17871">
    <property type="entry name" value="AAA_lid_9"/>
    <property type="match status" value="1"/>
</dbReference>
<dbReference type="Pfam" id="PF02861">
    <property type="entry name" value="Clp_N"/>
    <property type="match status" value="2"/>
</dbReference>
<dbReference type="SMART" id="SM00382">
    <property type="entry name" value="AAA"/>
    <property type="match status" value="1"/>
</dbReference>
<dbReference type="SUPFAM" id="SSF81923">
    <property type="entry name" value="Double Clp-N motif"/>
    <property type="match status" value="1"/>
</dbReference>
<dbReference type="SUPFAM" id="SSF52540">
    <property type="entry name" value="P-loop containing nucleoside triphosphate hydrolases"/>
    <property type="match status" value="1"/>
</dbReference>
<dbReference type="PROSITE" id="PS51903">
    <property type="entry name" value="CLP_R"/>
    <property type="match status" value="1"/>
</dbReference>
<dbReference type="PROSITE" id="PS00870">
    <property type="entry name" value="CLPAB_1"/>
    <property type="match status" value="1"/>
</dbReference>